<evidence type="ECO:0000255" key="1">
    <source>
        <dbReference type="HAMAP-Rule" id="MF_01325"/>
    </source>
</evidence>
<evidence type="ECO:0000305" key="2"/>
<dbReference type="EMBL" id="BA000011">
    <property type="protein sequence ID" value="BAB59470.1"/>
    <property type="molecule type" value="Genomic_DNA"/>
</dbReference>
<dbReference type="RefSeq" id="WP_010916582.1">
    <property type="nucleotide sequence ID" value="NC_002689.2"/>
</dbReference>
<dbReference type="SMR" id="Q97BX7"/>
<dbReference type="STRING" id="273116.gene:9381105"/>
<dbReference type="PaxDb" id="273116-14324543"/>
<dbReference type="GeneID" id="1440840"/>
<dbReference type="KEGG" id="tvo:TVG0333226"/>
<dbReference type="eggNOG" id="arCOG04070">
    <property type="taxonomic scope" value="Archaea"/>
</dbReference>
<dbReference type="HOGENOM" id="CLU_033361_2_0_2"/>
<dbReference type="OrthoDB" id="6121at2157"/>
<dbReference type="PhylomeDB" id="Q97BX7"/>
<dbReference type="Proteomes" id="UP000001017">
    <property type="component" value="Chromosome"/>
</dbReference>
<dbReference type="GO" id="GO:0022625">
    <property type="term" value="C:cytosolic large ribosomal subunit"/>
    <property type="evidence" value="ECO:0007669"/>
    <property type="project" value="TreeGrafter"/>
</dbReference>
<dbReference type="GO" id="GO:0019843">
    <property type="term" value="F:rRNA binding"/>
    <property type="evidence" value="ECO:0007669"/>
    <property type="project" value="UniProtKB-UniRule"/>
</dbReference>
<dbReference type="GO" id="GO:0003735">
    <property type="term" value="F:structural constituent of ribosome"/>
    <property type="evidence" value="ECO:0007669"/>
    <property type="project" value="InterPro"/>
</dbReference>
<dbReference type="GO" id="GO:0006412">
    <property type="term" value="P:translation"/>
    <property type="evidence" value="ECO:0007669"/>
    <property type="project" value="UniProtKB-UniRule"/>
</dbReference>
<dbReference type="Gene3D" id="3.30.1430.10">
    <property type="match status" value="1"/>
</dbReference>
<dbReference type="Gene3D" id="4.10.960.10">
    <property type="entry name" value="Ribosomal protein L3, domain 3"/>
    <property type="match status" value="1"/>
</dbReference>
<dbReference type="Gene3D" id="2.40.30.10">
    <property type="entry name" value="Translation factors"/>
    <property type="match status" value="1"/>
</dbReference>
<dbReference type="HAMAP" id="MF_01325_A">
    <property type="entry name" value="Ribosomal_uL3_A"/>
    <property type="match status" value="1"/>
</dbReference>
<dbReference type="InterPro" id="IPR045077">
    <property type="entry name" value="L3_arc_euk"/>
</dbReference>
<dbReference type="InterPro" id="IPR044892">
    <property type="entry name" value="Ribosomal_L3_dom_3_arc_sf"/>
</dbReference>
<dbReference type="InterPro" id="IPR000597">
    <property type="entry name" value="Ribosomal_uL3"/>
</dbReference>
<dbReference type="InterPro" id="IPR019928">
    <property type="entry name" value="Ribosomal_uL3_arc"/>
</dbReference>
<dbReference type="InterPro" id="IPR009000">
    <property type="entry name" value="Transl_B-barrel_sf"/>
</dbReference>
<dbReference type="NCBIfam" id="TIGR03626">
    <property type="entry name" value="L3_arch"/>
    <property type="match status" value="1"/>
</dbReference>
<dbReference type="NCBIfam" id="NF003261">
    <property type="entry name" value="PRK04231.1"/>
    <property type="match status" value="1"/>
</dbReference>
<dbReference type="PANTHER" id="PTHR11363">
    <property type="entry name" value="60S RIBOSOMAL PROTEIN L3-RELATED"/>
    <property type="match status" value="1"/>
</dbReference>
<dbReference type="PANTHER" id="PTHR11363:SF5">
    <property type="entry name" value="LARGE RIBOSOMAL SUBUNIT PROTEIN UL3"/>
    <property type="match status" value="1"/>
</dbReference>
<dbReference type="Pfam" id="PF00297">
    <property type="entry name" value="Ribosomal_L3"/>
    <property type="match status" value="1"/>
</dbReference>
<dbReference type="SUPFAM" id="SSF50447">
    <property type="entry name" value="Translation proteins"/>
    <property type="match status" value="1"/>
</dbReference>
<keyword id="KW-0687">Ribonucleoprotein</keyword>
<keyword id="KW-0689">Ribosomal protein</keyword>
<keyword id="KW-0694">RNA-binding</keyword>
<keyword id="KW-0699">rRNA-binding</keyword>
<sequence length="331" mass="37560">MATPHHSRRGSMAYYPRVRAKSIEPRIRSWPEISGPVKVQGFAGFKVGMTHVEMVDYRKTSVTAGQPIFVPVTVIEVPPLDVIGIRLYDEDEEGNMVVVYEKWTQNLDKELFKKITTFKEVKEKPVPETYADVRLIVATRNKDVPGIPSKKPEIFELRIGGGNSVKERFEYATAHLGKTIRFEDFSKPGKFVDVLSVTKGKGFTGHVQRFGVKLLPRKNRKHRRMIGTLGPWHPDWVRNTVPQAGQMGYQQRTISNVRVLKYSKGEDADTINVRGGFLHYGLVKNDYVLLFGSVPGPAKRLIKMRDPARQKVPDIDNVKLDYISLESKQGD</sequence>
<proteinExistence type="inferred from homology"/>
<reference key="1">
    <citation type="journal article" date="2000" name="Proc. Natl. Acad. Sci. U.S.A.">
        <title>Archaeal adaptation to higher temperatures revealed by genomic sequence of Thermoplasma volcanium.</title>
        <authorList>
            <person name="Kawashima T."/>
            <person name="Amano N."/>
            <person name="Koike H."/>
            <person name="Makino S."/>
            <person name="Higuchi S."/>
            <person name="Kawashima-Ohya Y."/>
            <person name="Watanabe K."/>
            <person name="Yamazaki M."/>
            <person name="Kanehori K."/>
            <person name="Kawamoto T."/>
            <person name="Nunoshiba T."/>
            <person name="Yamamoto Y."/>
            <person name="Aramaki H."/>
            <person name="Makino K."/>
            <person name="Suzuki M."/>
        </authorList>
    </citation>
    <scope>NUCLEOTIDE SEQUENCE [LARGE SCALE GENOMIC DNA]</scope>
    <source>
        <strain>ATCC 51530 / DSM 4299 / JCM 9571 / NBRC 15438 / GSS1</strain>
    </source>
</reference>
<name>RL3_THEVO</name>
<accession>Q97BX7</accession>
<gene>
    <name evidence="1" type="primary">rpl3</name>
    <name type="ordered locus">TV0328</name>
    <name type="ORF">TVG0333226</name>
</gene>
<comment type="function">
    <text evidence="1">One of the primary rRNA binding proteins, it binds directly near the 3'-end of the 23S rRNA, where it nucleates assembly of the 50S subunit.</text>
</comment>
<comment type="subunit">
    <text evidence="1">Part of the 50S ribosomal subunit. Forms a cluster with proteins L14 and L24e.</text>
</comment>
<comment type="similarity">
    <text evidence="1">Belongs to the universal ribosomal protein uL3 family.</text>
</comment>
<organism>
    <name type="scientific">Thermoplasma volcanium (strain ATCC 51530 / DSM 4299 / JCM 9571 / NBRC 15438 / GSS1)</name>
    <dbReference type="NCBI Taxonomy" id="273116"/>
    <lineage>
        <taxon>Archaea</taxon>
        <taxon>Methanobacteriati</taxon>
        <taxon>Thermoplasmatota</taxon>
        <taxon>Thermoplasmata</taxon>
        <taxon>Thermoplasmatales</taxon>
        <taxon>Thermoplasmataceae</taxon>
        <taxon>Thermoplasma</taxon>
    </lineage>
</organism>
<protein>
    <recommendedName>
        <fullName evidence="1">Large ribosomal subunit protein uL3</fullName>
    </recommendedName>
    <alternativeName>
        <fullName evidence="2">50S ribosomal protein L3</fullName>
    </alternativeName>
</protein>
<feature type="chain" id="PRO_0000077225" description="Large ribosomal subunit protein uL3">
    <location>
        <begin position="1"/>
        <end position="331"/>
    </location>
</feature>